<keyword id="KW-0067">ATP-binding</keyword>
<keyword id="KW-0131">Cell cycle</keyword>
<keyword id="KW-0132">Cell division</keyword>
<keyword id="KW-0133">Cell shape</keyword>
<keyword id="KW-0961">Cell wall biogenesis/degradation</keyword>
<keyword id="KW-0963">Cytoplasm</keyword>
<keyword id="KW-0436">Ligase</keyword>
<keyword id="KW-0547">Nucleotide-binding</keyword>
<keyword id="KW-0573">Peptidoglycan synthesis</keyword>
<organism>
    <name type="scientific">Cereibacter sphaeroides (strain ATCC 17029 / ATH 2.4.9)</name>
    <name type="common">Rhodobacter sphaeroides</name>
    <dbReference type="NCBI Taxonomy" id="349101"/>
    <lineage>
        <taxon>Bacteria</taxon>
        <taxon>Pseudomonadati</taxon>
        <taxon>Pseudomonadota</taxon>
        <taxon>Alphaproteobacteria</taxon>
        <taxon>Rhodobacterales</taxon>
        <taxon>Paracoccaceae</taxon>
        <taxon>Cereibacter</taxon>
    </lineage>
</organism>
<dbReference type="EC" id="6.3.2.8" evidence="1"/>
<dbReference type="EMBL" id="CP000577">
    <property type="protein sequence ID" value="ABN75895.1"/>
    <property type="molecule type" value="Genomic_DNA"/>
</dbReference>
<dbReference type="RefSeq" id="WP_011840602.1">
    <property type="nucleotide sequence ID" value="NC_009049.1"/>
</dbReference>
<dbReference type="SMR" id="A3PHS9"/>
<dbReference type="KEGG" id="rsh:Rsph17029_0784"/>
<dbReference type="HOGENOM" id="CLU_028104_2_1_5"/>
<dbReference type="UniPathway" id="UPA00219"/>
<dbReference type="GO" id="GO:0005737">
    <property type="term" value="C:cytoplasm"/>
    <property type="evidence" value="ECO:0007669"/>
    <property type="project" value="UniProtKB-SubCell"/>
</dbReference>
<dbReference type="GO" id="GO:0005524">
    <property type="term" value="F:ATP binding"/>
    <property type="evidence" value="ECO:0007669"/>
    <property type="project" value="UniProtKB-UniRule"/>
</dbReference>
<dbReference type="GO" id="GO:0008763">
    <property type="term" value="F:UDP-N-acetylmuramate-L-alanine ligase activity"/>
    <property type="evidence" value="ECO:0007669"/>
    <property type="project" value="UniProtKB-UniRule"/>
</dbReference>
<dbReference type="GO" id="GO:0051301">
    <property type="term" value="P:cell division"/>
    <property type="evidence" value="ECO:0007669"/>
    <property type="project" value="UniProtKB-KW"/>
</dbReference>
<dbReference type="GO" id="GO:0071555">
    <property type="term" value="P:cell wall organization"/>
    <property type="evidence" value="ECO:0007669"/>
    <property type="project" value="UniProtKB-KW"/>
</dbReference>
<dbReference type="GO" id="GO:0009252">
    <property type="term" value="P:peptidoglycan biosynthetic process"/>
    <property type="evidence" value="ECO:0007669"/>
    <property type="project" value="UniProtKB-UniRule"/>
</dbReference>
<dbReference type="GO" id="GO:0008360">
    <property type="term" value="P:regulation of cell shape"/>
    <property type="evidence" value="ECO:0007669"/>
    <property type="project" value="UniProtKB-KW"/>
</dbReference>
<dbReference type="Gene3D" id="3.90.190.20">
    <property type="entry name" value="Mur ligase, C-terminal domain"/>
    <property type="match status" value="1"/>
</dbReference>
<dbReference type="Gene3D" id="3.40.1190.10">
    <property type="entry name" value="Mur-like, catalytic domain"/>
    <property type="match status" value="1"/>
</dbReference>
<dbReference type="Gene3D" id="3.40.50.720">
    <property type="entry name" value="NAD(P)-binding Rossmann-like Domain"/>
    <property type="match status" value="1"/>
</dbReference>
<dbReference type="HAMAP" id="MF_00046">
    <property type="entry name" value="MurC"/>
    <property type="match status" value="1"/>
</dbReference>
<dbReference type="InterPro" id="IPR036565">
    <property type="entry name" value="Mur-like_cat_sf"/>
</dbReference>
<dbReference type="InterPro" id="IPR004101">
    <property type="entry name" value="Mur_ligase_C"/>
</dbReference>
<dbReference type="InterPro" id="IPR036615">
    <property type="entry name" value="Mur_ligase_C_dom_sf"/>
</dbReference>
<dbReference type="InterPro" id="IPR013221">
    <property type="entry name" value="Mur_ligase_cen"/>
</dbReference>
<dbReference type="InterPro" id="IPR000713">
    <property type="entry name" value="Mur_ligase_N"/>
</dbReference>
<dbReference type="InterPro" id="IPR050061">
    <property type="entry name" value="MurCDEF_pg_biosynth"/>
</dbReference>
<dbReference type="InterPro" id="IPR005758">
    <property type="entry name" value="UDP-N-AcMur_Ala_ligase_MurC"/>
</dbReference>
<dbReference type="NCBIfam" id="TIGR01082">
    <property type="entry name" value="murC"/>
    <property type="match status" value="1"/>
</dbReference>
<dbReference type="PANTHER" id="PTHR43445:SF3">
    <property type="entry name" value="UDP-N-ACETYLMURAMATE--L-ALANINE LIGASE"/>
    <property type="match status" value="1"/>
</dbReference>
<dbReference type="PANTHER" id="PTHR43445">
    <property type="entry name" value="UDP-N-ACETYLMURAMATE--L-ALANINE LIGASE-RELATED"/>
    <property type="match status" value="1"/>
</dbReference>
<dbReference type="Pfam" id="PF01225">
    <property type="entry name" value="Mur_ligase"/>
    <property type="match status" value="1"/>
</dbReference>
<dbReference type="Pfam" id="PF02875">
    <property type="entry name" value="Mur_ligase_C"/>
    <property type="match status" value="1"/>
</dbReference>
<dbReference type="Pfam" id="PF08245">
    <property type="entry name" value="Mur_ligase_M"/>
    <property type="match status" value="1"/>
</dbReference>
<dbReference type="SUPFAM" id="SSF51984">
    <property type="entry name" value="MurCD N-terminal domain"/>
    <property type="match status" value="1"/>
</dbReference>
<dbReference type="SUPFAM" id="SSF53623">
    <property type="entry name" value="MurD-like peptide ligases, catalytic domain"/>
    <property type="match status" value="1"/>
</dbReference>
<dbReference type="SUPFAM" id="SSF53244">
    <property type="entry name" value="MurD-like peptide ligases, peptide-binding domain"/>
    <property type="match status" value="1"/>
</dbReference>
<accession>A3PHS9</accession>
<name>MURC_CERS1</name>
<reference key="1">
    <citation type="submission" date="2007-02" db="EMBL/GenBank/DDBJ databases">
        <title>Complete sequence of chromosome 1 of Rhodobacter sphaeroides ATCC 17029.</title>
        <authorList>
            <person name="Copeland A."/>
            <person name="Lucas S."/>
            <person name="Lapidus A."/>
            <person name="Barry K."/>
            <person name="Detter J.C."/>
            <person name="Glavina del Rio T."/>
            <person name="Hammon N."/>
            <person name="Israni S."/>
            <person name="Dalin E."/>
            <person name="Tice H."/>
            <person name="Pitluck S."/>
            <person name="Kiss H."/>
            <person name="Brettin T."/>
            <person name="Bruce D."/>
            <person name="Han C."/>
            <person name="Tapia R."/>
            <person name="Gilna P."/>
            <person name="Schmutz J."/>
            <person name="Larimer F."/>
            <person name="Land M."/>
            <person name="Hauser L."/>
            <person name="Kyrpides N."/>
            <person name="Mikhailova N."/>
            <person name="Richardson P."/>
            <person name="Mackenzie C."/>
            <person name="Choudhary M."/>
            <person name="Donohue T.J."/>
            <person name="Kaplan S."/>
        </authorList>
    </citation>
    <scope>NUCLEOTIDE SEQUENCE [LARGE SCALE GENOMIC DNA]</scope>
    <source>
        <strain>ATCC 17029 / ATH 2.4.9</strain>
    </source>
</reference>
<proteinExistence type="inferred from homology"/>
<comment type="function">
    <text evidence="1">Cell wall formation.</text>
</comment>
<comment type="catalytic activity">
    <reaction evidence="1">
        <text>UDP-N-acetyl-alpha-D-muramate + L-alanine + ATP = UDP-N-acetyl-alpha-D-muramoyl-L-alanine + ADP + phosphate + H(+)</text>
        <dbReference type="Rhea" id="RHEA:23372"/>
        <dbReference type="ChEBI" id="CHEBI:15378"/>
        <dbReference type="ChEBI" id="CHEBI:30616"/>
        <dbReference type="ChEBI" id="CHEBI:43474"/>
        <dbReference type="ChEBI" id="CHEBI:57972"/>
        <dbReference type="ChEBI" id="CHEBI:70757"/>
        <dbReference type="ChEBI" id="CHEBI:83898"/>
        <dbReference type="ChEBI" id="CHEBI:456216"/>
        <dbReference type="EC" id="6.3.2.8"/>
    </reaction>
</comment>
<comment type="pathway">
    <text evidence="1">Cell wall biogenesis; peptidoglycan biosynthesis.</text>
</comment>
<comment type="subcellular location">
    <subcellularLocation>
        <location evidence="1">Cytoplasm</location>
    </subcellularLocation>
</comment>
<comment type="similarity">
    <text evidence="1">Belongs to the MurCDEF family.</text>
</comment>
<gene>
    <name evidence="1" type="primary">murC</name>
    <name type="ordered locus">Rsph17029_0784</name>
</gene>
<feature type="chain" id="PRO_1000004394" description="UDP-N-acetylmuramate--L-alanine ligase">
    <location>
        <begin position="1"/>
        <end position="470"/>
    </location>
</feature>
<feature type="binding site" evidence="1">
    <location>
        <begin position="118"/>
        <end position="124"/>
    </location>
    <ligand>
        <name>ATP</name>
        <dbReference type="ChEBI" id="CHEBI:30616"/>
    </ligand>
</feature>
<protein>
    <recommendedName>
        <fullName evidence="1">UDP-N-acetylmuramate--L-alanine ligase</fullName>
        <ecNumber evidence="1">6.3.2.8</ecNumber>
    </recommendedName>
    <alternativeName>
        <fullName evidence="1">UDP-N-acetylmuramoyl-L-alanine synthetase</fullName>
    </alternativeName>
</protein>
<sequence length="470" mass="50080">MNAATKLPGELGPIHFVGIGGIGMSGIAEVLMTLGYRVQGSDAKASKITERLVSLGATFFEGQRAGNLGEAAVVVISSAIKKGNPELEEARLRGLPVVRRAEMLAELMRMRSNIAIAGTHGKTTTTTMVATLLDKGGFDPTVINGGVIHAYGSNARAGAGEWMVVEADESDGSFNRLPATIAIVTNIDPEHMEHWGSFDALRKGFYDFVTNIPFYGLAVCCTDHAEVQALVGRVTDRRIVTFGFNAQADVRAINLRYENGIAHFDVALQSEGAGHVIEGMSLPMPGDHNVSNALAAVAVARHLGMKKDEIREALAAFGGVNRRFTKVGEVGGVTIIDDYGHHPVEIAAVLKAARQAVKGRVIAVHQPHRYSRLHSLFDDFCTCFNEADVVAIAEVYAAGEDPIPGAGRDDLVAGLIAHGHRHARAILCEDDLERLVREQARPGDMVVCLGAGTISAWANNLPARLMGKAA</sequence>
<evidence type="ECO:0000255" key="1">
    <source>
        <dbReference type="HAMAP-Rule" id="MF_00046"/>
    </source>
</evidence>